<reference key="1">
    <citation type="journal article" date="2004" name="Nature">
        <title>Genome evolution in yeasts.</title>
        <authorList>
            <person name="Dujon B."/>
            <person name="Sherman D."/>
            <person name="Fischer G."/>
            <person name="Durrens P."/>
            <person name="Casaregola S."/>
            <person name="Lafontaine I."/>
            <person name="de Montigny J."/>
            <person name="Marck C."/>
            <person name="Neuveglise C."/>
            <person name="Talla E."/>
            <person name="Goffard N."/>
            <person name="Frangeul L."/>
            <person name="Aigle M."/>
            <person name="Anthouard V."/>
            <person name="Babour A."/>
            <person name="Barbe V."/>
            <person name="Barnay S."/>
            <person name="Blanchin S."/>
            <person name="Beckerich J.-M."/>
            <person name="Beyne E."/>
            <person name="Bleykasten C."/>
            <person name="Boisrame A."/>
            <person name="Boyer J."/>
            <person name="Cattolico L."/>
            <person name="Confanioleri F."/>
            <person name="de Daruvar A."/>
            <person name="Despons L."/>
            <person name="Fabre E."/>
            <person name="Fairhead C."/>
            <person name="Ferry-Dumazet H."/>
            <person name="Groppi A."/>
            <person name="Hantraye F."/>
            <person name="Hennequin C."/>
            <person name="Jauniaux N."/>
            <person name="Joyet P."/>
            <person name="Kachouri R."/>
            <person name="Kerrest A."/>
            <person name="Koszul R."/>
            <person name="Lemaire M."/>
            <person name="Lesur I."/>
            <person name="Ma L."/>
            <person name="Muller H."/>
            <person name="Nicaud J.-M."/>
            <person name="Nikolski M."/>
            <person name="Oztas S."/>
            <person name="Ozier-Kalogeropoulos O."/>
            <person name="Pellenz S."/>
            <person name="Potier S."/>
            <person name="Richard G.-F."/>
            <person name="Straub M.-L."/>
            <person name="Suleau A."/>
            <person name="Swennen D."/>
            <person name="Tekaia F."/>
            <person name="Wesolowski-Louvel M."/>
            <person name="Westhof E."/>
            <person name="Wirth B."/>
            <person name="Zeniou-Meyer M."/>
            <person name="Zivanovic Y."/>
            <person name="Bolotin-Fukuhara M."/>
            <person name="Thierry A."/>
            <person name="Bouchier C."/>
            <person name="Caudron B."/>
            <person name="Scarpelli C."/>
            <person name="Gaillardin C."/>
            <person name="Weissenbach J."/>
            <person name="Wincker P."/>
            <person name="Souciet J.-L."/>
        </authorList>
    </citation>
    <scope>NUCLEOTIDE SEQUENCE [LARGE SCALE GENOMIC DNA]</scope>
    <source>
        <strain>ATCC 36239 / CBS 767 / BCRC 21394 / JCM 1990 / NBRC 0083 / IGC 2968</strain>
    </source>
</reference>
<accession>Q6BPI1</accession>
<gene>
    <name type="primary">GLR1</name>
    <name type="ordered locus">DEHA2E13442g</name>
</gene>
<comment type="function">
    <text evidence="3">Catalyzes the reduction of glutathione disulfide (GSSG) to reduced glutathione (GSH). Constitutes the major mechanism to maintain a high GSH:GSSG ratio in the cytosol.</text>
</comment>
<comment type="catalytic activity">
    <reaction evidence="3">
        <text>2 glutathione + NADP(+) = glutathione disulfide + NADPH + H(+)</text>
        <dbReference type="Rhea" id="RHEA:11740"/>
        <dbReference type="ChEBI" id="CHEBI:15378"/>
        <dbReference type="ChEBI" id="CHEBI:57783"/>
        <dbReference type="ChEBI" id="CHEBI:57925"/>
        <dbReference type="ChEBI" id="CHEBI:58297"/>
        <dbReference type="ChEBI" id="CHEBI:58349"/>
        <dbReference type="EC" id="1.8.1.7"/>
    </reaction>
</comment>
<comment type="cofactor">
    <cofactor evidence="3">
        <name>FAD</name>
        <dbReference type="ChEBI" id="CHEBI:57692"/>
    </cofactor>
    <text evidence="3">Binds 1 FAD per subunit.</text>
</comment>
<comment type="subunit">
    <text evidence="3">Homodimer.</text>
</comment>
<comment type="subcellular location">
    <subcellularLocation>
        <location evidence="3">Cytoplasm</location>
    </subcellularLocation>
    <subcellularLocation>
        <location evidence="3">Mitochondrion</location>
    </subcellularLocation>
</comment>
<comment type="miscellaneous">
    <text evidence="3">The active site is a redox-active disulfide bond.</text>
</comment>
<comment type="similarity">
    <text evidence="4">Belongs to the class-I pyridine nucleotide-disulfide oxidoreductase family.</text>
</comment>
<comment type="sequence caution" evidence="4">
    <conflict type="erroneous initiation">
        <sequence resource="EMBL-CDS" id="CAG88130"/>
    </conflict>
</comment>
<name>GSHR_DEBHA</name>
<evidence type="ECO:0000250" key="1">
    <source>
        <dbReference type="UniProtKB" id="P00390"/>
    </source>
</evidence>
<evidence type="ECO:0000250" key="2">
    <source>
        <dbReference type="UniProtKB" id="P06715"/>
    </source>
</evidence>
<evidence type="ECO:0000250" key="3">
    <source>
        <dbReference type="UniProtKB" id="P41921"/>
    </source>
</evidence>
<evidence type="ECO:0000305" key="4"/>
<organism>
    <name type="scientific">Debaryomyces hansenii (strain ATCC 36239 / CBS 767 / BCRC 21394 / JCM 1990 / NBRC 0083 / IGC 2968)</name>
    <name type="common">Yeast</name>
    <name type="synonym">Torulaspora hansenii</name>
    <dbReference type="NCBI Taxonomy" id="284592"/>
    <lineage>
        <taxon>Eukaryota</taxon>
        <taxon>Fungi</taxon>
        <taxon>Dikarya</taxon>
        <taxon>Ascomycota</taxon>
        <taxon>Saccharomycotina</taxon>
        <taxon>Pichiomycetes</taxon>
        <taxon>Debaryomycetaceae</taxon>
        <taxon>Debaryomyces</taxon>
    </lineage>
</organism>
<keyword id="KW-0963">Cytoplasm</keyword>
<keyword id="KW-1015">Disulfide bond</keyword>
<keyword id="KW-0274">FAD</keyword>
<keyword id="KW-0285">Flavoprotein</keyword>
<keyword id="KW-0496">Mitochondrion</keyword>
<keyword id="KW-0521">NADP</keyword>
<keyword id="KW-0560">Oxidoreductase</keyword>
<keyword id="KW-0676">Redox-active center</keyword>
<keyword id="KW-1185">Reference proteome</keyword>
<feature type="chain" id="PRO_0000067967" description="Glutathione reductase">
    <location>
        <begin position="1"/>
        <end position="490"/>
    </location>
</feature>
<feature type="active site" description="Proton acceptor" evidence="1">
    <location>
        <position position="479"/>
    </location>
</feature>
<feature type="binding site" evidence="3">
    <location>
        <position position="19"/>
    </location>
    <ligand>
        <name>FAD</name>
        <dbReference type="ChEBI" id="CHEBI:57692"/>
    </ligand>
</feature>
<feature type="binding site" evidence="1">
    <location>
        <position position="19"/>
    </location>
    <ligand>
        <name>glutathione</name>
        <dbReference type="ChEBI" id="CHEBI:57925"/>
    </ligand>
</feature>
<feature type="binding site" evidence="3">
    <location>
        <position position="20"/>
    </location>
    <ligand>
        <name>FAD</name>
        <dbReference type="ChEBI" id="CHEBI:57692"/>
    </ligand>
</feature>
<feature type="binding site" evidence="1">
    <location>
        <position position="26"/>
    </location>
    <ligand>
        <name>glutathione</name>
        <dbReference type="ChEBI" id="CHEBI:57925"/>
    </ligand>
</feature>
<feature type="binding site" evidence="3">
    <location>
        <position position="39"/>
    </location>
    <ligand>
        <name>FAD</name>
        <dbReference type="ChEBI" id="CHEBI:57692"/>
    </ligand>
</feature>
<feature type="binding site" evidence="3">
    <location>
        <position position="48"/>
    </location>
    <ligand>
        <name>FAD</name>
        <dbReference type="ChEBI" id="CHEBI:57692"/>
    </ligand>
</feature>
<feature type="binding site" evidence="3">
    <location>
        <position position="49"/>
    </location>
    <ligand>
        <name>FAD</name>
        <dbReference type="ChEBI" id="CHEBI:57692"/>
    </ligand>
</feature>
<feature type="binding site" evidence="3">
    <location>
        <position position="57"/>
    </location>
    <ligand>
        <name>FAD</name>
        <dbReference type="ChEBI" id="CHEBI:57692"/>
    </ligand>
</feature>
<feature type="binding site" evidence="1">
    <location>
        <position position="110"/>
    </location>
    <ligand>
        <name>glutathione</name>
        <dbReference type="ChEBI" id="CHEBI:57925"/>
    </ligand>
</feature>
<feature type="binding site" evidence="3">
    <location>
        <position position="126"/>
    </location>
    <ligand>
        <name>FAD</name>
        <dbReference type="ChEBI" id="CHEBI:57692"/>
    </ligand>
</feature>
<feature type="binding site" evidence="2">
    <location>
        <position position="208"/>
    </location>
    <ligand>
        <name>NADP(+)</name>
        <dbReference type="ChEBI" id="CHEBI:58349"/>
    </ligand>
</feature>
<feature type="binding site" evidence="2">
    <location>
        <position position="211"/>
    </location>
    <ligand>
        <name>NADP(+)</name>
        <dbReference type="ChEBI" id="CHEBI:58349"/>
    </ligand>
</feature>
<feature type="binding site" evidence="2">
    <location>
        <position position="214"/>
    </location>
    <ligand>
        <name>NADP(+)</name>
        <dbReference type="ChEBI" id="CHEBI:58349"/>
    </ligand>
</feature>
<feature type="binding site" evidence="2">
    <location>
        <position position="231"/>
    </location>
    <ligand>
        <name>NADP(+)</name>
        <dbReference type="ChEBI" id="CHEBI:58349"/>
    </ligand>
</feature>
<feature type="binding site" evidence="2">
    <location>
        <position position="237"/>
    </location>
    <ligand>
        <name>NADP(+)</name>
        <dbReference type="ChEBI" id="CHEBI:58349"/>
    </ligand>
</feature>
<feature type="binding site" evidence="3">
    <location>
        <position position="246"/>
    </location>
    <ligand>
        <name>glutathione</name>
        <dbReference type="ChEBI" id="CHEBI:57925"/>
    </ligand>
</feature>
<feature type="binding site" evidence="2">
    <location>
        <position position="297"/>
    </location>
    <ligand>
        <name>NADP(+)</name>
        <dbReference type="ChEBI" id="CHEBI:58349"/>
    </ligand>
</feature>
<feature type="binding site" evidence="3">
    <location>
        <position position="337"/>
    </location>
    <ligand>
        <name>FAD</name>
        <dbReference type="ChEBI" id="CHEBI:57692"/>
    </ligand>
</feature>
<feature type="binding site" evidence="2">
    <location>
        <position position="343"/>
    </location>
    <ligand>
        <name>NADP(+)</name>
        <dbReference type="ChEBI" id="CHEBI:58349"/>
    </ligand>
</feature>
<feature type="binding site" evidence="3">
    <location>
        <position position="345"/>
    </location>
    <ligand>
        <name>FAD</name>
        <dbReference type="ChEBI" id="CHEBI:57692"/>
    </ligand>
</feature>
<feature type="binding site" evidence="1">
    <location>
        <position position="353"/>
    </location>
    <ligand>
        <name>glutathione</name>
        <dbReference type="ChEBI" id="CHEBI:57925"/>
    </ligand>
</feature>
<feature type="binding site" evidence="2">
    <location>
        <position position="379"/>
    </location>
    <ligand>
        <name>NADP(+)</name>
        <dbReference type="ChEBI" id="CHEBI:58349"/>
    </ligand>
</feature>
<feature type="binding site" evidence="3">
    <location>
        <position position="432"/>
    </location>
    <ligand>
        <name>glutathione</name>
        <dbReference type="ChEBI" id="CHEBI:57925"/>
    </ligand>
</feature>
<feature type="binding site" evidence="3">
    <location>
        <position position="479"/>
    </location>
    <ligand>
        <name>FAD</name>
        <dbReference type="ChEBI" id="CHEBI:57692"/>
    </ligand>
</feature>
<feature type="disulfide bond" description="Redox-active" evidence="3">
    <location>
        <begin position="49"/>
        <end position="54"/>
    </location>
</feature>
<proteinExistence type="inferred from homology"/>
<protein>
    <recommendedName>
        <fullName>Glutathione reductase</fullName>
        <shortName>GR</shortName>
        <shortName>GRase</shortName>
        <ecNumber>1.8.1.7</ecNumber>
    </recommendedName>
</protein>
<sequence length="490" mass="53520">MAPLQAIRKYDYLVIGGGSGGVASARRAASYGAKVLLIESKFNKMGGTCVNVGCVPKKVMWYAGDLAEKRHHLKSYGLSTTDDKVKYGDFDWSTFKDKRDAYVKRLNGIYERNLKNEGVDYIYGFAHFANSNGDVEVTLTGDQELSFLEEGKEFKKDEKLVFAGSKTLIATGGYAINPPNVEGHELGTTSDGFFELQKQPKSVAVVGAGYIGVELSGIFKALGSETHLVIRGDTVLRSFDESIQNSITDYYTDKLGVNIIKQSGSVSKVEKIDGDRKKITLGNGQVLEVDELIWTMGRKSLINIGLDKVGVTLNDKQQVDVDQFQQTANPNIFSLGDVIGKVELTPVAIAAGRRLSNRLFSGDKAFENDHLDYSNVPSVIFSHPEAGSIGLSCKEAKEKYGEDQIKIYKSKFNAMYYAMMEDDSLKSPTSYKVVCAGEDEKVVGLHIVGDSSAEILQGFGVAIKMGATKKDFDSCVAIHPTSAEELVTMK</sequence>
<dbReference type="EC" id="1.8.1.7"/>
<dbReference type="EMBL" id="CR382137">
    <property type="protein sequence ID" value="CAG88130.2"/>
    <property type="status" value="ALT_INIT"/>
    <property type="molecule type" value="Genomic_DNA"/>
</dbReference>
<dbReference type="RefSeq" id="XP_459889.2">
    <property type="nucleotide sequence ID" value="XM_459889.2"/>
</dbReference>
<dbReference type="SMR" id="Q6BPI1"/>
<dbReference type="FunCoup" id="Q6BPI1">
    <property type="interactions" value="1127"/>
</dbReference>
<dbReference type="STRING" id="284592.Q6BPI1"/>
<dbReference type="GeneID" id="2902393"/>
<dbReference type="KEGG" id="dha:DEHA2E13442g"/>
<dbReference type="eggNOG" id="KOG0405">
    <property type="taxonomic scope" value="Eukaryota"/>
</dbReference>
<dbReference type="HOGENOM" id="CLU_016755_2_2_1"/>
<dbReference type="InParanoid" id="Q6BPI1"/>
<dbReference type="OrthoDB" id="5956163at2759"/>
<dbReference type="Proteomes" id="UP000000599">
    <property type="component" value="Chromosome E"/>
</dbReference>
<dbReference type="GO" id="GO:0005829">
    <property type="term" value="C:cytosol"/>
    <property type="evidence" value="ECO:0007669"/>
    <property type="project" value="TreeGrafter"/>
</dbReference>
<dbReference type="GO" id="GO:0005739">
    <property type="term" value="C:mitochondrion"/>
    <property type="evidence" value="ECO:0007669"/>
    <property type="project" value="UniProtKB-SubCell"/>
</dbReference>
<dbReference type="GO" id="GO:0050660">
    <property type="term" value="F:flavin adenine dinucleotide binding"/>
    <property type="evidence" value="ECO:0007669"/>
    <property type="project" value="InterPro"/>
</dbReference>
<dbReference type="GO" id="GO:0004362">
    <property type="term" value="F:glutathione-disulfide reductase (NADPH) activity"/>
    <property type="evidence" value="ECO:0007669"/>
    <property type="project" value="UniProtKB-EC"/>
</dbReference>
<dbReference type="GO" id="GO:0050661">
    <property type="term" value="F:NADP binding"/>
    <property type="evidence" value="ECO:0007669"/>
    <property type="project" value="InterPro"/>
</dbReference>
<dbReference type="GO" id="GO:0045454">
    <property type="term" value="P:cell redox homeostasis"/>
    <property type="evidence" value="ECO:0007669"/>
    <property type="project" value="InterPro"/>
</dbReference>
<dbReference type="GO" id="GO:0034599">
    <property type="term" value="P:cellular response to oxidative stress"/>
    <property type="evidence" value="ECO:0007669"/>
    <property type="project" value="TreeGrafter"/>
</dbReference>
<dbReference type="GO" id="GO:0006749">
    <property type="term" value="P:glutathione metabolic process"/>
    <property type="evidence" value="ECO:0007669"/>
    <property type="project" value="InterPro"/>
</dbReference>
<dbReference type="FunFam" id="3.30.390.30:FF:000003">
    <property type="entry name" value="Glutathione reductase"/>
    <property type="match status" value="1"/>
</dbReference>
<dbReference type="FunFam" id="3.50.50.60:FF:000235">
    <property type="entry name" value="Glutathione reductase"/>
    <property type="match status" value="1"/>
</dbReference>
<dbReference type="Gene3D" id="3.30.390.30">
    <property type="match status" value="1"/>
</dbReference>
<dbReference type="Gene3D" id="3.50.50.60">
    <property type="entry name" value="FAD/NAD(P)-binding domain"/>
    <property type="match status" value="2"/>
</dbReference>
<dbReference type="InterPro" id="IPR036188">
    <property type="entry name" value="FAD/NAD-bd_sf"/>
</dbReference>
<dbReference type="InterPro" id="IPR023753">
    <property type="entry name" value="FAD/NAD-binding_dom"/>
</dbReference>
<dbReference type="InterPro" id="IPR016156">
    <property type="entry name" value="FAD/NAD-linked_Rdtase_dimer_sf"/>
</dbReference>
<dbReference type="InterPro" id="IPR006322">
    <property type="entry name" value="Glutathione_Rdtase_euk/bac"/>
</dbReference>
<dbReference type="InterPro" id="IPR046952">
    <property type="entry name" value="GSHR/TRXR-like"/>
</dbReference>
<dbReference type="InterPro" id="IPR001100">
    <property type="entry name" value="Pyr_nuc-diS_OxRdtase"/>
</dbReference>
<dbReference type="InterPro" id="IPR004099">
    <property type="entry name" value="Pyr_nucl-diS_OxRdtase_dimer"/>
</dbReference>
<dbReference type="InterPro" id="IPR012999">
    <property type="entry name" value="Pyr_OxRdtase_I_AS"/>
</dbReference>
<dbReference type="NCBIfam" id="TIGR01421">
    <property type="entry name" value="gluta_reduc_1"/>
    <property type="match status" value="1"/>
</dbReference>
<dbReference type="NCBIfam" id="NF004776">
    <property type="entry name" value="PRK06116.1"/>
    <property type="match status" value="1"/>
</dbReference>
<dbReference type="PANTHER" id="PTHR42737">
    <property type="entry name" value="GLUTATHIONE REDUCTASE"/>
    <property type="match status" value="1"/>
</dbReference>
<dbReference type="PANTHER" id="PTHR42737:SF2">
    <property type="entry name" value="GLUTATHIONE REDUCTASE"/>
    <property type="match status" value="1"/>
</dbReference>
<dbReference type="Pfam" id="PF07992">
    <property type="entry name" value="Pyr_redox_2"/>
    <property type="match status" value="1"/>
</dbReference>
<dbReference type="Pfam" id="PF02852">
    <property type="entry name" value="Pyr_redox_dim"/>
    <property type="match status" value="1"/>
</dbReference>
<dbReference type="PIRSF" id="PIRSF000350">
    <property type="entry name" value="Mercury_reductase_MerA"/>
    <property type="match status" value="1"/>
</dbReference>
<dbReference type="PRINTS" id="PR00368">
    <property type="entry name" value="FADPNR"/>
</dbReference>
<dbReference type="PRINTS" id="PR00411">
    <property type="entry name" value="PNDRDTASEI"/>
</dbReference>
<dbReference type="SUPFAM" id="SSF51905">
    <property type="entry name" value="FAD/NAD(P)-binding domain"/>
    <property type="match status" value="1"/>
</dbReference>
<dbReference type="SUPFAM" id="SSF55424">
    <property type="entry name" value="FAD/NAD-linked reductases, dimerisation (C-terminal) domain"/>
    <property type="match status" value="1"/>
</dbReference>
<dbReference type="PROSITE" id="PS00076">
    <property type="entry name" value="PYRIDINE_REDOX_1"/>
    <property type="match status" value="1"/>
</dbReference>